<comment type="function">
    <text evidence="1 5">Translation factor that promotes translation elongation and termination, particularly upon ribosome stalling at specific amino acid sequence contexts (By similarity). Binds between the exit (E) and peptidyl (P) site of the ribosome and promotes rescue of stalled ribosome: specifically required for efficient translation of polyproline-containing peptides as well as other motifs that stall the ribosome (By similarity). Acts as a ribosome quality control (RQC) cofactor by joining the RQC complex to facilitate peptidyl transfer during CAT tailing step (By similarity). Involved in supporting growth and plays a regulatory role in the response to sub-lethal osmotic and nutrient stress (PubMed:20492553).</text>
</comment>
<comment type="tissue specificity">
    <text evidence="5 8">Expressed in the vascular tissues of roots, stems and leaves. Localized in phloem companion cells rather than sieve-tube members. Not expressed in xylem or procambium. Detected in root tips and in the chalazal tissue of fertilized ovules.</text>
</comment>
<comment type="induction">
    <text evidence="6 7">Up-regulated at post-transcriptional level by iron deficiency.</text>
</comment>
<comment type="PTM">
    <text evidence="3">Lys-52 undergoes hypusination, a unique post-translational modification that consists in the addition of a butylamino group from spermidine to lysine side chain, leading to the formation of the unusual amino acid hypusine. eIF-5As are the only known proteins to undergo this modification, which is essential for their function.</text>
</comment>
<comment type="disruption phenotype">
    <text evidence="8">No visible phenotype, but presence of extra root protoxylem cell files.</text>
</comment>
<comment type="similarity">
    <text evidence="9">Belongs to the eIF-5A family.</text>
</comment>
<feature type="chain" id="PRO_0000142465" description="Eukaryotic translation initiation factor 5A-3">
    <location>
        <begin position="1"/>
        <end position="158"/>
    </location>
</feature>
<feature type="region of interest" description="Disordered" evidence="4">
    <location>
        <begin position="1"/>
        <end position="23"/>
    </location>
</feature>
<feature type="compositionally biased region" description="Basic and acidic residues" evidence="4">
    <location>
        <begin position="1"/>
        <end position="10"/>
    </location>
</feature>
<feature type="modified residue" description="Phosphoserine" evidence="2">
    <location>
        <position position="2"/>
    </location>
</feature>
<feature type="modified residue" description="Hypusine" evidence="3">
    <location>
        <position position="51"/>
    </location>
</feature>
<feature type="sequence conflict" description="In Ref. 3; AAK50073/AAL31161." evidence="9" ref="3">
    <original>M</original>
    <variation>I</variation>
    <location>
        <position position="144"/>
    </location>
</feature>
<accession>Q9C505</accession>
<accession>Q94JU4</accession>
<name>IF5A3_ARATH</name>
<gene>
    <name type="primary">ELF5A-3</name>
    <name type="ordered locus">At1g69410</name>
    <name type="ORF">F10D13.8</name>
    <name type="ORF">F23O10.2</name>
</gene>
<evidence type="ECO:0000250" key="1">
    <source>
        <dbReference type="UniProtKB" id="P23301"/>
    </source>
</evidence>
<evidence type="ECO:0000250" key="2">
    <source>
        <dbReference type="UniProtKB" id="Q93VP3"/>
    </source>
</evidence>
<evidence type="ECO:0000250" key="3">
    <source>
        <dbReference type="UniProtKB" id="Q9XI91"/>
    </source>
</evidence>
<evidence type="ECO:0000256" key="4">
    <source>
        <dbReference type="SAM" id="MobiDB-lite"/>
    </source>
</evidence>
<evidence type="ECO:0000269" key="5">
    <source>
    </source>
</evidence>
<evidence type="ECO:0000269" key="6">
    <source>
    </source>
</evidence>
<evidence type="ECO:0000269" key="7">
    <source>
    </source>
</evidence>
<evidence type="ECO:0000269" key="8">
    <source>
    </source>
</evidence>
<evidence type="ECO:0000305" key="9"/>
<organism>
    <name type="scientific">Arabidopsis thaliana</name>
    <name type="common">Mouse-ear cress</name>
    <dbReference type="NCBI Taxonomy" id="3702"/>
    <lineage>
        <taxon>Eukaryota</taxon>
        <taxon>Viridiplantae</taxon>
        <taxon>Streptophyta</taxon>
        <taxon>Embryophyta</taxon>
        <taxon>Tracheophyta</taxon>
        <taxon>Spermatophyta</taxon>
        <taxon>Magnoliopsida</taxon>
        <taxon>eudicotyledons</taxon>
        <taxon>Gunneridae</taxon>
        <taxon>Pentapetalae</taxon>
        <taxon>rosids</taxon>
        <taxon>malvids</taxon>
        <taxon>Brassicales</taxon>
        <taxon>Brassicaceae</taxon>
        <taxon>Camelineae</taxon>
        <taxon>Arabidopsis</taxon>
    </lineage>
</organism>
<sequence length="158" mass="17207">MSDDEHHFESSDAGASKTYPQQAGNIRKGGHIVIKGRPCKVVEVSTSKTGKHGHAKCHFVAIDIFTSKKLEDIVPSSHNCDVPHVNRVDYQLIDISEDGFVSLLTDNGSTKDDLKLPTDEALLTQLKNGFEEGKDIVVSVMSAMGEEQMCALKEVGPK</sequence>
<dbReference type="EMBL" id="AC018364">
    <property type="protein sequence ID" value="AAG52496.1"/>
    <property type="molecule type" value="Genomic_DNA"/>
</dbReference>
<dbReference type="EMBL" id="AC073178">
    <property type="protein sequence ID" value="AAG60110.1"/>
    <property type="molecule type" value="Genomic_DNA"/>
</dbReference>
<dbReference type="EMBL" id="CP002684">
    <property type="protein sequence ID" value="AEE34921.1"/>
    <property type="molecule type" value="Genomic_DNA"/>
</dbReference>
<dbReference type="EMBL" id="AF372933">
    <property type="protein sequence ID" value="AAK50073.1"/>
    <property type="molecule type" value="mRNA"/>
</dbReference>
<dbReference type="EMBL" id="AY060530">
    <property type="protein sequence ID" value="AAL31161.1"/>
    <property type="molecule type" value="mRNA"/>
</dbReference>
<dbReference type="EMBL" id="AY087040">
    <property type="protein sequence ID" value="AAM64601.1"/>
    <property type="molecule type" value="mRNA"/>
</dbReference>
<dbReference type="RefSeq" id="NP_177100.1">
    <property type="nucleotide sequence ID" value="NM_105608.4"/>
</dbReference>
<dbReference type="SMR" id="Q9C505"/>
<dbReference type="BioGRID" id="28494">
    <property type="interactions" value="1"/>
</dbReference>
<dbReference type="FunCoup" id="Q9C505">
    <property type="interactions" value="2881"/>
</dbReference>
<dbReference type="STRING" id="3702.Q9C505"/>
<dbReference type="iPTMnet" id="Q9C505"/>
<dbReference type="PaxDb" id="3702-AT1G69410.1"/>
<dbReference type="ProteomicsDB" id="250681"/>
<dbReference type="EnsemblPlants" id="AT1G69410.1">
    <property type="protein sequence ID" value="AT1G69410.1"/>
    <property type="gene ID" value="AT1G69410"/>
</dbReference>
<dbReference type="GeneID" id="843273"/>
<dbReference type="Gramene" id="AT1G69410.1">
    <property type="protein sequence ID" value="AT1G69410.1"/>
    <property type="gene ID" value="AT1G69410"/>
</dbReference>
<dbReference type="KEGG" id="ath:AT1G69410"/>
<dbReference type="Araport" id="AT1G69410"/>
<dbReference type="TAIR" id="AT1G69410">
    <property type="gene designation" value="ELF5A-3"/>
</dbReference>
<dbReference type="eggNOG" id="KOG3271">
    <property type="taxonomic scope" value="Eukaryota"/>
</dbReference>
<dbReference type="HOGENOM" id="CLU_102600_1_0_1"/>
<dbReference type="InParanoid" id="Q9C505"/>
<dbReference type="OMA" id="PCKIMEL"/>
<dbReference type="OrthoDB" id="9975114at2759"/>
<dbReference type="PhylomeDB" id="Q9C505"/>
<dbReference type="PRO" id="PR:Q9C505"/>
<dbReference type="Proteomes" id="UP000006548">
    <property type="component" value="Chromosome 1"/>
</dbReference>
<dbReference type="ExpressionAtlas" id="Q9C505">
    <property type="expression patterns" value="baseline and differential"/>
</dbReference>
<dbReference type="GO" id="GO:0005829">
    <property type="term" value="C:cytosol"/>
    <property type="evidence" value="ECO:0007005"/>
    <property type="project" value="TAIR"/>
</dbReference>
<dbReference type="GO" id="GO:0005739">
    <property type="term" value="C:mitochondrion"/>
    <property type="evidence" value="ECO:0007005"/>
    <property type="project" value="TAIR"/>
</dbReference>
<dbReference type="GO" id="GO:0043022">
    <property type="term" value="F:ribosome binding"/>
    <property type="evidence" value="ECO:0007669"/>
    <property type="project" value="InterPro"/>
</dbReference>
<dbReference type="GO" id="GO:0003723">
    <property type="term" value="F:RNA binding"/>
    <property type="evidence" value="ECO:0007669"/>
    <property type="project" value="InterPro"/>
</dbReference>
<dbReference type="GO" id="GO:0003746">
    <property type="term" value="F:translation elongation factor activity"/>
    <property type="evidence" value="ECO:0007669"/>
    <property type="project" value="InterPro"/>
</dbReference>
<dbReference type="GO" id="GO:0003743">
    <property type="term" value="F:translation initiation factor activity"/>
    <property type="evidence" value="ECO:0007669"/>
    <property type="project" value="UniProtKB-KW"/>
</dbReference>
<dbReference type="GO" id="GO:0045901">
    <property type="term" value="P:positive regulation of translational elongation"/>
    <property type="evidence" value="ECO:0007669"/>
    <property type="project" value="InterPro"/>
</dbReference>
<dbReference type="GO" id="GO:0045905">
    <property type="term" value="P:positive regulation of translational termination"/>
    <property type="evidence" value="ECO:0007669"/>
    <property type="project" value="InterPro"/>
</dbReference>
<dbReference type="CDD" id="cd04468">
    <property type="entry name" value="S1_eIF5A"/>
    <property type="match status" value="1"/>
</dbReference>
<dbReference type="FunFam" id="2.30.30.30:FF:000012">
    <property type="entry name" value="Eukaryotic translation initiation factor 5A"/>
    <property type="match status" value="1"/>
</dbReference>
<dbReference type="FunFam" id="2.40.50.140:FF:000034">
    <property type="entry name" value="Eukaryotic translation initiation factor 5A"/>
    <property type="match status" value="1"/>
</dbReference>
<dbReference type="Gene3D" id="2.30.30.30">
    <property type="match status" value="1"/>
</dbReference>
<dbReference type="Gene3D" id="2.40.50.140">
    <property type="entry name" value="Nucleic acid-binding proteins"/>
    <property type="match status" value="1"/>
</dbReference>
<dbReference type="InterPro" id="IPR001884">
    <property type="entry name" value="IF5A-like"/>
</dbReference>
<dbReference type="InterPro" id="IPR048670">
    <property type="entry name" value="IF5A-like_N"/>
</dbReference>
<dbReference type="InterPro" id="IPR012340">
    <property type="entry name" value="NA-bd_OB-fold"/>
</dbReference>
<dbReference type="InterPro" id="IPR014722">
    <property type="entry name" value="Rib_uL2_dom2"/>
</dbReference>
<dbReference type="InterPro" id="IPR019769">
    <property type="entry name" value="Trans_elong_IF5A_hypusine_site"/>
</dbReference>
<dbReference type="InterPro" id="IPR020189">
    <property type="entry name" value="Transl_elong_IF5A_C"/>
</dbReference>
<dbReference type="InterPro" id="IPR008991">
    <property type="entry name" value="Translation_prot_SH3-like_sf"/>
</dbReference>
<dbReference type="NCBIfam" id="TIGR00037">
    <property type="entry name" value="eIF_5A"/>
    <property type="match status" value="1"/>
</dbReference>
<dbReference type="PANTHER" id="PTHR11673">
    <property type="entry name" value="TRANSLATION INITIATION FACTOR 5A FAMILY MEMBER"/>
    <property type="match status" value="1"/>
</dbReference>
<dbReference type="Pfam" id="PF01287">
    <property type="entry name" value="eIF-5a"/>
    <property type="match status" value="1"/>
</dbReference>
<dbReference type="Pfam" id="PF21485">
    <property type="entry name" value="IF5A-like_N"/>
    <property type="match status" value="1"/>
</dbReference>
<dbReference type="PIRSF" id="PIRSF003025">
    <property type="entry name" value="eIF5A"/>
    <property type="match status" value="1"/>
</dbReference>
<dbReference type="SMART" id="SM01376">
    <property type="entry name" value="eIF-5a"/>
    <property type="match status" value="1"/>
</dbReference>
<dbReference type="SUPFAM" id="SSF50249">
    <property type="entry name" value="Nucleic acid-binding proteins"/>
    <property type="match status" value="1"/>
</dbReference>
<dbReference type="SUPFAM" id="SSF50104">
    <property type="entry name" value="Translation proteins SH3-like domain"/>
    <property type="match status" value="1"/>
</dbReference>
<dbReference type="PROSITE" id="PS00302">
    <property type="entry name" value="IF5A_HYPUSINE"/>
    <property type="match status" value="1"/>
</dbReference>
<protein>
    <recommendedName>
        <fullName>Eukaryotic translation initiation factor 5A-3</fullName>
        <shortName>AtELF5A-3</shortName>
        <shortName>eIF-5A-3</shortName>
    </recommendedName>
</protein>
<proteinExistence type="evidence at transcript level"/>
<keyword id="KW-0385">Hypusine</keyword>
<keyword id="KW-0396">Initiation factor</keyword>
<keyword id="KW-0597">Phosphoprotein</keyword>
<keyword id="KW-0648">Protein biosynthesis</keyword>
<keyword id="KW-1185">Reference proteome</keyword>
<reference key="1">
    <citation type="journal article" date="2000" name="Nature">
        <title>Sequence and analysis of chromosome 1 of the plant Arabidopsis thaliana.</title>
        <authorList>
            <person name="Theologis A."/>
            <person name="Ecker J.R."/>
            <person name="Palm C.J."/>
            <person name="Federspiel N.A."/>
            <person name="Kaul S."/>
            <person name="White O."/>
            <person name="Alonso J."/>
            <person name="Altafi H."/>
            <person name="Araujo R."/>
            <person name="Bowman C.L."/>
            <person name="Brooks S.Y."/>
            <person name="Buehler E."/>
            <person name="Chan A."/>
            <person name="Chao Q."/>
            <person name="Chen H."/>
            <person name="Cheuk R.F."/>
            <person name="Chin C.W."/>
            <person name="Chung M.K."/>
            <person name="Conn L."/>
            <person name="Conway A.B."/>
            <person name="Conway A.R."/>
            <person name="Creasy T.H."/>
            <person name="Dewar K."/>
            <person name="Dunn P."/>
            <person name="Etgu P."/>
            <person name="Feldblyum T.V."/>
            <person name="Feng J.-D."/>
            <person name="Fong B."/>
            <person name="Fujii C.Y."/>
            <person name="Gill J.E."/>
            <person name="Goldsmith A.D."/>
            <person name="Haas B."/>
            <person name="Hansen N.F."/>
            <person name="Hughes B."/>
            <person name="Huizar L."/>
            <person name="Hunter J.L."/>
            <person name="Jenkins J."/>
            <person name="Johnson-Hopson C."/>
            <person name="Khan S."/>
            <person name="Khaykin E."/>
            <person name="Kim C.J."/>
            <person name="Koo H.L."/>
            <person name="Kremenetskaia I."/>
            <person name="Kurtz D.B."/>
            <person name="Kwan A."/>
            <person name="Lam B."/>
            <person name="Langin-Hooper S."/>
            <person name="Lee A."/>
            <person name="Lee J.M."/>
            <person name="Lenz C.A."/>
            <person name="Li J.H."/>
            <person name="Li Y.-P."/>
            <person name="Lin X."/>
            <person name="Liu S.X."/>
            <person name="Liu Z.A."/>
            <person name="Luros J.S."/>
            <person name="Maiti R."/>
            <person name="Marziali A."/>
            <person name="Militscher J."/>
            <person name="Miranda M."/>
            <person name="Nguyen M."/>
            <person name="Nierman W.C."/>
            <person name="Osborne B.I."/>
            <person name="Pai G."/>
            <person name="Peterson J."/>
            <person name="Pham P.K."/>
            <person name="Rizzo M."/>
            <person name="Rooney T."/>
            <person name="Rowley D."/>
            <person name="Sakano H."/>
            <person name="Salzberg S.L."/>
            <person name="Schwartz J.R."/>
            <person name="Shinn P."/>
            <person name="Southwick A.M."/>
            <person name="Sun H."/>
            <person name="Tallon L.J."/>
            <person name="Tambunga G."/>
            <person name="Toriumi M.J."/>
            <person name="Town C.D."/>
            <person name="Utterback T."/>
            <person name="Van Aken S."/>
            <person name="Vaysberg M."/>
            <person name="Vysotskaia V.S."/>
            <person name="Walker M."/>
            <person name="Wu D."/>
            <person name="Yu G."/>
            <person name="Fraser C.M."/>
            <person name="Venter J.C."/>
            <person name="Davis R.W."/>
        </authorList>
    </citation>
    <scope>NUCLEOTIDE SEQUENCE [LARGE SCALE GENOMIC DNA]</scope>
    <source>
        <strain>cv. Columbia</strain>
    </source>
</reference>
<reference key="2">
    <citation type="journal article" date="2017" name="Plant J.">
        <title>Araport11: a complete reannotation of the Arabidopsis thaliana reference genome.</title>
        <authorList>
            <person name="Cheng C.Y."/>
            <person name="Krishnakumar V."/>
            <person name="Chan A.P."/>
            <person name="Thibaud-Nissen F."/>
            <person name="Schobel S."/>
            <person name="Town C.D."/>
        </authorList>
    </citation>
    <scope>GENOME REANNOTATION</scope>
    <source>
        <strain>cv. Columbia</strain>
    </source>
</reference>
<reference key="3">
    <citation type="journal article" date="2003" name="Science">
        <title>Empirical analysis of transcriptional activity in the Arabidopsis genome.</title>
        <authorList>
            <person name="Yamada K."/>
            <person name="Lim J."/>
            <person name="Dale J.M."/>
            <person name="Chen H."/>
            <person name="Shinn P."/>
            <person name="Palm C.J."/>
            <person name="Southwick A.M."/>
            <person name="Wu H.C."/>
            <person name="Kim C.J."/>
            <person name="Nguyen M."/>
            <person name="Pham P.K."/>
            <person name="Cheuk R.F."/>
            <person name="Karlin-Newmann G."/>
            <person name="Liu S.X."/>
            <person name="Lam B."/>
            <person name="Sakano H."/>
            <person name="Wu T."/>
            <person name="Yu G."/>
            <person name="Miranda M."/>
            <person name="Quach H.L."/>
            <person name="Tripp M."/>
            <person name="Chang C.H."/>
            <person name="Lee J.M."/>
            <person name="Toriumi M.J."/>
            <person name="Chan M.M."/>
            <person name="Tang C.C."/>
            <person name="Onodera C.S."/>
            <person name="Deng J.M."/>
            <person name="Akiyama K."/>
            <person name="Ansari Y."/>
            <person name="Arakawa T."/>
            <person name="Banh J."/>
            <person name="Banno F."/>
            <person name="Bowser L."/>
            <person name="Brooks S.Y."/>
            <person name="Carninci P."/>
            <person name="Chao Q."/>
            <person name="Choy N."/>
            <person name="Enju A."/>
            <person name="Goldsmith A.D."/>
            <person name="Gurjal M."/>
            <person name="Hansen N.F."/>
            <person name="Hayashizaki Y."/>
            <person name="Johnson-Hopson C."/>
            <person name="Hsuan V.W."/>
            <person name="Iida K."/>
            <person name="Karnes M."/>
            <person name="Khan S."/>
            <person name="Koesema E."/>
            <person name="Ishida J."/>
            <person name="Jiang P.X."/>
            <person name="Jones T."/>
            <person name="Kawai J."/>
            <person name="Kamiya A."/>
            <person name="Meyers C."/>
            <person name="Nakajima M."/>
            <person name="Narusaka M."/>
            <person name="Seki M."/>
            <person name="Sakurai T."/>
            <person name="Satou M."/>
            <person name="Tamse R."/>
            <person name="Vaysberg M."/>
            <person name="Wallender E.K."/>
            <person name="Wong C."/>
            <person name="Yamamura Y."/>
            <person name="Yuan S."/>
            <person name="Shinozaki K."/>
            <person name="Davis R.W."/>
            <person name="Theologis A."/>
            <person name="Ecker J.R."/>
        </authorList>
    </citation>
    <scope>NUCLEOTIDE SEQUENCE [LARGE SCALE MRNA]</scope>
    <source>
        <strain>cv. Columbia</strain>
    </source>
</reference>
<reference key="4">
    <citation type="submission" date="2002-03" db="EMBL/GenBank/DDBJ databases">
        <title>Full-length cDNA from Arabidopsis thaliana.</title>
        <authorList>
            <person name="Brover V.V."/>
            <person name="Troukhan M.E."/>
            <person name="Alexandrov N.A."/>
            <person name="Lu Y.-P."/>
            <person name="Flavell R.B."/>
            <person name="Feldmann K.A."/>
        </authorList>
    </citation>
    <scope>NUCLEOTIDE SEQUENCE [LARGE SCALE MRNA]</scope>
</reference>
<reference key="5">
    <citation type="journal article" date="2010" name="Plant Cell Environ.">
        <title>Arabidopsis eIF5A3 influences growth and the response to osmotic and nutrient stress.</title>
        <authorList>
            <person name="Ma F."/>
            <person name="Liu Z."/>
            <person name="Wang T.W."/>
            <person name="Hopkins M.T."/>
            <person name="Peterson C.A."/>
            <person name="Thompson J.E."/>
        </authorList>
    </citation>
    <scope>FUNCTION</scope>
    <scope>TISSUE SPECIFICITY</scope>
    <source>
        <strain>cv. Columbia</strain>
    </source>
</reference>
<reference key="6">
    <citation type="journal article" date="2011" name="Plant Physiol.">
        <title>iTRAQ protein profile analysis of Arabidopsis roots reveals new aspects critical for iron homeostasis.</title>
        <authorList>
            <person name="Lan P."/>
            <person name="Li W."/>
            <person name="Wen T.N."/>
            <person name="Shiau J.Y."/>
            <person name="Wu Y.C."/>
            <person name="Lin W."/>
            <person name="Schmidt W."/>
        </authorList>
    </citation>
    <scope>INDUCTION BY IRON DEFICIENCY</scope>
</reference>
<reference key="7">
    <citation type="journal article" date="2011" name="Plant Signal. Behav.">
        <title>The enigma of eIF5A in the iron deficiency response of Arabidopsis.</title>
        <authorList>
            <person name="Lan P."/>
            <person name="Schmidt W."/>
        </authorList>
    </citation>
    <scope>INDUCTION BY IRON DEFICIENCY</scope>
</reference>
<reference key="8">
    <citation type="journal article" date="2013" name="Plant Cell">
        <title>The Arabidopsis eukaryotic translation initiation factor eIF5A-2 regulates root protoxylem development by modulating cytokinin signaling.</title>
        <authorList>
            <person name="Ren B."/>
            <person name="Chen Q."/>
            <person name="Hong S."/>
            <person name="Zhao W."/>
            <person name="Feng J."/>
            <person name="Feng H."/>
            <person name="Zuo J."/>
        </authorList>
    </citation>
    <scope>TISSUE SPECIFICITY</scope>
    <scope>DISRUPTION PHENOTYPE</scope>
    <source>
        <strain>cv. Columbia</strain>
    </source>
</reference>